<dbReference type="EC" id="2.3.1.180" evidence="1"/>
<dbReference type="EMBL" id="AM236080">
    <property type="protein sequence ID" value="CAK07134.1"/>
    <property type="molecule type" value="Genomic_DNA"/>
</dbReference>
<dbReference type="RefSeq" id="WP_011651317.1">
    <property type="nucleotide sequence ID" value="NC_008380.1"/>
</dbReference>
<dbReference type="SMR" id="Q1MIS6"/>
<dbReference type="EnsemblBacteria" id="CAK07134">
    <property type="protein sequence ID" value="CAK07134"/>
    <property type="gene ID" value="RL1639"/>
</dbReference>
<dbReference type="KEGG" id="rle:RL1639"/>
<dbReference type="eggNOG" id="COG0332">
    <property type="taxonomic scope" value="Bacteria"/>
</dbReference>
<dbReference type="HOGENOM" id="CLU_039592_3_1_5"/>
<dbReference type="UniPathway" id="UPA00094"/>
<dbReference type="Proteomes" id="UP000006575">
    <property type="component" value="Chromosome"/>
</dbReference>
<dbReference type="GO" id="GO:0005737">
    <property type="term" value="C:cytoplasm"/>
    <property type="evidence" value="ECO:0007669"/>
    <property type="project" value="UniProtKB-SubCell"/>
</dbReference>
<dbReference type="GO" id="GO:0004315">
    <property type="term" value="F:3-oxoacyl-[acyl-carrier-protein] synthase activity"/>
    <property type="evidence" value="ECO:0007669"/>
    <property type="project" value="InterPro"/>
</dbReference>
<dbReference type="GO" id="GO:0033818">
    <property type="term" value="F:beta-ketoacyl-acyl-carrier-protein synthase III activity"/>
    <property type="evidence" value="ECO:0007669"/>
    <property type="project" value="UniProtKB-UniRule"/>
</dbReference>
<dbReference type="GO" id="GO:0006633">
    <property type="term" value="P:fatty acid biosynthetic process"/>
    <property type="evidence" value="ECO:0007669"/>
    <property type="project" value="UniProtKB-UniRule"/>
</dbReference>
<dbReference type="CDD" id="cd00830">
    <property type="entry name" value="KAS_III"/>
    <property type="match status" value="1"/>
</dbReference>
<dbReference type="FunFam" id="3.40.47.10:FF:000004">
    <property type="entry name" value="3-oxoacyl-[acyl-carrier-protein] synthase 3"/>
    <property type="match status" value="1"/>
</dbReference>
<dbReference type="Gene3D" id="3.40.47.10">
    <property type="match status" value="1"/>
</dbReference>
<dbReference type="HAMAP" id="MF_01815">
    <property type="entry name" value="FabH"/>
    <property type="match status" value="1"/>
</dbReference>
<dbReference type="InterPro" id="IPR013747">
    <property type="entry name" value="ACP_syn_III_C"/>
</dbReference>
<dbReference type="InterPro" id="IPR013751">
    <property type="entry name" value="ACP_syn_III_N"/>
</dbReference>
<dbReference type="InterPro" id="IPR004655">
    <property type="entry name" value="FabH"/>
</dbReference>
<dbReference type="InterPro" id="IPR016039">
    <property type="entry name" value="Thiolase-like"/>
</dbReference>
<dbReference type="NCBIfam" id="TIGR00747">
    <property type="entry name" value="fabH"/>
    <property type="match status" value="1"/>
</dbReference>
<dbReference type="NCBIfam" id="NF006829">
    <property type="entry name" value="PRK09352.1"/>
    <property type="match status" value="1"/>
</dbReference>
<dbReference type="PANTHER" id="PTHR43091">
    <property type="entry name" value="3-OXOACYL-[ACYL-CARRIER-PROTEIN] SYNTHASE"/>
    <property type="match status" value="1"/>
</dbReference>
<dbReference type="PANTHER" id="PTHR43091:SF1">
    <property type="entry name" value="BETA-KETOACYL-[ACYL-CARRIER-PROTEIN] SYNTHASE III, CHLOROPLASTIC"/>
    <property type="match status" value="1"/>
</dbReference>
<dbReference type="Pfam" id="PF08545">
    <property type="entry name" value="ACP_syn_III"/>
    <property type="match status" value="1"/>
</dbReference>
<dbReference type="Pfam" id="PF08541">
    <property type="entry name" value="ACP_syn_III_C"/>
    <property type="match status" value="1"/>
</dbReference>
<dbReference type="SUPFAM" id="SSF53901">
    <property type="entry name" value="Thiolase-like"/>
    <property type="match status" value="1"/>
</dbReference>
<organism>
    <name type="scientific">Rhizobium johnstonii (strain DSM 114642 / LMG 32736 / 3841)</name>
    <name type="common">Rhizobium leguminosarum bv. viciae</name>
    <dbReference type="NCBI Taxonomy" id="216596"/>
    <lineage>
        <taxon>Bacteria</taxon>
        <taxon>Pseudomonadati</taxon>
        <taxon>Pseudomonadota</taxon>
        <taxon>Alphaproteobacteria</taxon>
        <taxon>Hyphomicrobiales</taxon>
        <taxon>Rhizobiaceae</taxon>
        <taxon>Rhizobium/Agrobacterium group</taxon>
        <taxon>Rhizobium</taxon>
        <taxon>Rhizobium johnstonii</taxon>
    </lineage>
</organism>
<comment type="function">
    <text evidence="1">Catalyzes the condensation reaction of fatty acid synthesis by the addition to an acyl acceptor of two carbons from malonyl-ACP. Catalyzes the first condensation reaction which initiates fatty acid synthesis and may therefore play a role in governing the total rate of fatty acid production. Possesses both acetoacetyl-ACP synthase and acetyl transacylase activities. Its substrate specificity determines the biosynthesis of branched-chain and/or straight-chain of fatty acids.</text>
</comment>
<comment type="catalytic activity">
    <reaction evidence="1">
        <text>malonyl-[ACP] + acetyl-CoA + H(+) = 3-oxobutanoyl-[ACP] + CO2 + CoA</text>
        <dbReference type="Rhea" id="RHEA:12080"/>
        <dbReference type="Rhea" id="RHEA-COMP:9623"/>
        <dbReference type="Rhea" id="RHEA-COMP:9625"/>
        <dbReference type="ChEBI" id="CHEBI:15378"/>
        <dbReference type="ChEBI" id="CHEBI:16526"/>
        <dbReference type="ChEBI" id="CHEBI:57287"/>
        <dbReference type="ChEBI" id="CHEBI:57288"/>
        <dbReference type="ChEBI" id="CHEBI:78449"/>
        <dbReference type="ChEBI" id="CHEBI:78450"/>
        <dbReference type="EC" id="2.3.1.180"/>
    </reaction>
</comment>
<comment type="pathway">
    <text evidence="1">Lipid metabolism; fatty acid biosynthesis.</text>
</comment>
<comment type="subunit">
    <text evidence="1">Homodimer.</text>
</comment>
<comment type="subcellular location">
    <subcellularLocation>
        <location evidence="1">Cytoplasm</location>
    </subcellularLocation>
</comment>
<comment type="domain">
    <text evidence="1">The last Arg residue of the ACP-binding site is essential for the weak association between ACP/AcpP and FabH.</text>
</comment>
<comment type="similarity">
    <text evidence="1">Belongs to the thiolase-like superfamily. FabH family.</text>
</comment>
<proteinExistence type="inferred from homology"/>
<keyword id="KW-0012">Acyltransferase</keyword>
<keyword id="KW-0963">Cytoplasm</keyword>
<keyword id="KW-0275">Fatty acid biosynthesis</keyword>
<keyword id="KW-0276">Fatty acid metabolism</keyword>
<keyword id="KW-0444">Lipid biosynthesis</keyword>
<keyword id="KW-0443">Lipid metabolism</keyword>
<keyword id="KW-0511">Multifunctional enzyme</keyword>
<keyword id="KW-0808">Transferase</keyword>
<evidence type="ECO:0000255" key="1">
    <source>
        <dbReference type="HAMAP-Rule" id="MF_01815"/>
    </source>
</evidence>
<gene>
    <name evidence="1" type="primary">fabH</name>
    <name type="ordered locus">RL1639</name>
</gene>
<feature type="chain" id="PRO_1000187891" description="Beta-ketoacyl-[acyl-carrier-protein] synthase III">
    <location>
        <begin position="1"/>
        <end position="323"/>
    </location>
</feature>
<feature type="region of interest" description="ACP-binding" evidence="1">
    <location>
        <begin position="251"/>
        <end position="255"/>
    </location>
</feature>
<feature type="active site" evidence="1">
    <location>
        <position position="113"/>
    </location>
</feature>
<feature type="active site" evidence="1">
    <location>
        <position position="250"/>
    </location>
</feature>
<feature type="active site" evidence="1">
    <location>
        <position position="280"/>
    </location>
</feature>
<accession>Q1MIS6</accession>
<reference key="1">
    <citation type="journal article" date="2006" name="Genome Biol.">
        <title>The genome of Rhizobium leguminosarum has recognizable core and accessory components.</title>
        <authorList>
            <person name="Young J.P.W."/>
            <person name="Crossman L.C."/>
            <person name="Johnston A.W.B."/>
            <person name="Thomson N.R."/>
            <person name="Ghazoui Z.F."/>
            <person name="Hull K.H."/>
            <person name="Wexler M."/>
            <person name="Curson A.R.J."/>
            <person name="Todd J.D."/>
            <person name="Poole P.S."/>
            <person name="Mauchline T.H."/>
            <person name="East A.K."/>
            <person name="Quail M.A."/>
            <person name="Churcher C."/>
            <person name="Arrowsmith C."/>
            <person name="Cherevach I."/>
            <person name="Chillingworth T."/>
            <person name="Clarke K."/>
            <person name="Cronin A."/>
            <person name="Davis P."/>
            <person name="Fraser A."/>
            <person name="Hance Z."/>
            <person name="Hauser H."/>
            <person name="Jagels K."/>
            <person name="Moule S."/>
            <person name="Mungall K."/>
            <person name="Norbertczak H."/>
            <person name="Rabbinowitsch E."/>
            <person name="Sanders M."/>
            <person name="Simmonds M."/>
            <person name="Whitehead S."/>
            <person name="Parkhill J."/>
        </authorList>
    </citation>
    <scope>NUCLEOTIDE SEQUENCE [LARGE SCALE GENOMIC DNA]</scope>
    <source>
        <strain>DSM 114642 / LMG 32736 / 3841</strain>
    </source>
</reference>
<name>FABH_RHIJ3</name>
<sequence length="323" mass="34148">MIRSVVRGFGAALPKRVMTNRDMEAIVDTSDEWIVQRTGIRQRYVAGDDETTASLGEAAARAALANGGLTPADIDLVICATSTPDNTFPATSVNIQNRLGMSHGFAFDVQAVCTGFVYAVTTADAYIRGGLAKRVLVIGAETFSRILDWNDRTTCVLFGDGAGAIILEATEGEGTVADRGVLTAHLRSDGSHKEKLYVDGGPSTTGTVGKLRMEGREVFKYAVGMITDVIQAAFDSTGTTADDLDWLVPHQANRRIIDGSAKKLNIDAAKVVITVDLHGNTSAASIPLALATAAGDGRIKKGDLVMLEAMGGGFTWGAVLLRW</sequence>
<protein>
    <recommendedName>
        <fullName evidence="1">Beta-ketoacyl-[acyl-carrier-protein] synthase III</fullName>
        <shortName evidence="1">Beta-ketoacyl-ACP synthase III</shortName>
        <shortName evidence="1">KAS III</shortName>
        <ecNumber evidence="1">2.3.1.180</ecNumber>
    </recommendedName>
    <alternativeName>
        <fullName evidence="1">3-oxoacyl-[acyl-carrier-protein] synthase 3</fullName>
    </alternativeName>
    <alternativeName>
        <fullName evidence="1">3-oxoacyl-[acyl-carrier-protein] synthase III</fullName>
    </alternativeName>
</protein>